<dbReference type="EMBL" id="CP017623">
    <property type="protein sequence ID" value="AOW26996.1"/>
    <property type="molecule type" value="Genomic_DNA"/>
</dbReference>
<dbReference type="RefSeq" id="XP_722235.1">
    <property type="nucleotide sequence ID" value="XM_717142.1"/>
</dbReference>
<dbReference type="SMR" id="Q5AKU4"/>
<dbReference type="FunCoup" id="Q5AKU4">
    <property type="interactions" value="178"/>
</dbReference>
<dbReference type="STRING" id="237561.Q5AKU4"/>
<dbReference type="EnsemblFungi" id="C1_13950C_A-T">
    <property type="protein sequence ID" value="C1_13950C_A-T-p1"/>
    <property type="gene ID" value="C1_13950C_A"/>
</dbReference>
<dbReference type="GeneID" id="3636186"/>
<dbReference type="KEGG" id="cal:CAALFM_C113950CA"/>
<dbReference type="CGD" id="CAL0000188918">
    <property type="gene designation" value="orf19.12500"/>
</dbReference>
<dbReference type="VEuPathDB" id="FungiDB:C1_13950C_A"/>
<dbReference type="eggNOG" id="KOG3439">
    <property type="taxonomic scope" value="Eukaryota"/>
</dbReference>
<dbReference type="HOGENOM" id="CLU_106795_0_1_1"/>
<dbReference type="InParanoid" id="Q5AKU4"/>
<dbReference type="OMA" id="DLPMNMS"/>
<dbReference type="OrthoDB" id="10003551at2759"/>
<dbReference type="PRO" id="PR:Q5AKU4"/>
<dbReference type="Proteomes" id="UP000000559">
    <property type="component" value="Chromosome 1"/>
</dbReference>
<dbReference type="GO" id="GO:0034274">
    <property type="term" value="C:Atg12-Atg5-Atg16 complex"/>
    <property type="evidence" value="ECO:0000318"/>
    <property type="project" value="GO_Central"/>
</dbReference>
<dbReference type="GO" id="GO:0000421">
    <property type="term" value="C:autophagosome membrane"/>
    <property type="evidence" value="ECO:0000318"/>
    <property type="project" value="GO_Central"/>
</dbReference>
<dbReference type="GO" id="GO:0005829">
    <property type="term" value="C:cytosol"/>
    <property type="evidence" value="ECO:0007669"/>
    <property type="project" value="EnsemblFungi"/>
</dbReference>
<dbReference type="GO" id="GO:0034045">
    <property type="term" value="C:phagophore assembly site membrane"/>
    <property type="evidence" value="ECO:0000318"/>
    <property type="project" value="GO_Central"/>
</dbReference>
<dbReference type="GO" id="GO:0019776">
    <property type="term" value="F:Atg8-family ligase activity"/>
    <property type="evidence" value="ECO:0007669"/>
    <property type="project" value="EnsemblFungi"/>
</dbReference>
<dbReference type="GO" id="GO:0008047">
    <property type="term" value="F:enzyme activator activity"/>
    <property type="evidence" value="ECO:0007669"/>
    <property type="project" value="EnsemblFungi"/>
</dbReference>
<dbReference type="GO" id="GO:0031386">
    <property type="term" value="F:protein tag activity"/>
    <property type="evidence" value="ECO:0000318"/>
    <property type="project" value="GO_Central"/>
</dbReference>
<dbReference type="GO" id="GO:0000045">
    <property type="term" value="P:autophagosome assembly"/>
    <property type="evidence" value="ECO:0000318"/>
    <property type="project" value="GO_Central"/>
</dbReference>
<dbReference type="GO" id="GO:0097352">
    <property type="term" value="P:autophagosome maturation"/>
    <property type="evidence" value="ECO:0000318"/>
    <property type="project" value="GO_Central"/>
</dbReference>
<dbReference type="GO" id="GO:0000422">
    <property type="term" value="P:autophagy of mitochondrion"/>
    <property type="evidence" value="ECO:0000318"/>
    <property type="project" value="GO_Central"/>
</dbReference>
<dbReference type="GO" id="GO:0032258">
    <property type="term" value="P:cytoplasm to vacuole targeting by the Cvt pathway"/>
    <property type="evidence" value="ECO:0007669"/>
    <property type="project" value="EnsemblFungi"/>
</dbReference>
<dbReference type="GO" id="GO:0061723">
    <property type="term" value="P:glycophagy"/>
    <property type="evidence" value="ECO:0000318"/>
    <property type="project" value="GO_Central"/>
</dbReference>
<dbReference type="GO" id="GO:0034727">
    <property type="term" value="P:piecemeal microautophagy of the nucleus"/>
    <property type="evidence" value="ECO:0000318"/>
    <property type="project" value="GO_Central"/>
</dbReference>
<dbReference type="CDD" id="cd01612">
    <property type="entry name" value="Ubl_ATG12"/>
    <property type="match status" value="1"/>
</dbReference>
<dbReference type="Gene3D" id="3.10.20.90">
    <property type="entry name" value="Phosphatidylinositol 3-kinase Catalytic Subunit, Chain A, domain 1"/>
    <property type="match status" value="1"/>
</dbReference>
<dbReference type="InterPro" id="IPR007242">
    <property type="entry name" value="Atg12"/>
</dbReference>
<dbReference type="InterPro" id="IPR029071">
    <property type="entry name" value="Ubiquitin-like_domsf"/>
</dbReference>
<dbReference type="PANTHER" id="PTHR13385">
    <property type="entry name" value="AUTOPHAGY PROTEIN 12"/>
    <property type="match status" value="1"/>
</dbReference>
<dbReference type="PANTHER" id="PTHR13385:SF0">
    <property type="entry name" value="UBIQUITIN-LIKE PROTEIN ATG12"/>
    <property type="match status" value="1"/>
</dbReference>
<dbReference type="Pfam" id="PF04110">
    <property type="entry name" value="APG12"/>
    <property type="match status" value="1"/>
</dbReference>
<dbReference type="SUPFAM" id="SSF54236">
    <property type="entry name" value="Ubiquitin-like"/>
    <property type="match status" value="1"/>
</dbReference>
<reference key="1">
    <citation type="journal article" date="2004" name="Proc. Natl. Acad. Sci. U.S.A.">
        <title>The diploid genome sequence of Candida albicans.</title>
        <authorList>
            <person name="Jones T."/>
            <person name="Federspiel N.A."/>
            <person name="Chibana H."/>
            <person name="Dungan J."/>
            <person name="Kalman S."/>
            <person name="Magee B.B."/>
            <person name="Newport G."/>
            <person name="Thorstenson Y.R."/>
            <person name="Agabian N."/>
            <person name="Magee P.T."/>
            <person name="Davis R.W."/>
            <person name="Scherer S."/>
        </authorList>
    </citation>
    <scope>NUCLEOTIDE SEQUENCE [LARGE SCALE GENOMIC DNA]</scope>
    <source>
        <strain>SC5314 / ATCC MYA-2876</strain>
    </source>
</reference>
<reference key="2">
    <citation type="journal article" date="2007" name="Genome Biol.">
        <title>Assembly of the Candida albicans genome into sixteen supercontigs aligned on the eight chromosomes.</title>
        <authorList>
            <person name="van het Hoog M."/>
            <person name="Rast T.J."/>
            <person name="Martchenko M."/>
            <person name="Grindle S."/>
            <person name="Dignard D."/>
            <person name="Hogues H."/>
            <person name="Cuomo C."/>
            <person name="Berriman M."/>
            <person name="Scherer S."/>
            <person name="Magee B.B."/>
            <person name="Whiteway M."/>
            <person name="Chibana H."/>
            <person name="Nantel A."/>
            <person name="Magee P.T."/>
        </authorList>
    </citation>
    <scope>GENOME REANNOTATION</scope>
    <source>
        <strain>SC5314 / ATCC MYA-2876</strain>
    </source>
</reference>
<reference key="3">
    <citation type="journal article" date="2013" name="Genome Biol.">
        <title>Assembly of a phased diploid Candida albicans genome facilitates allele-specific measurements and provides a simple model for repeat and indel structure.</title>
        <authorList>
            <person name="Muzzey D."/>
            <person name="Schwartz K."/>
            <person name="Weissman J.S."/>
            <person name="Sherlock G."/>
        </authorList>
    </citation>
    <scope>NUCLEOTIDE SEQUENCE [LARGE SCALE GENOMIC DNA]</scope>
    <scope>GENOME REANNOTATION</scope>
    <source>
        <strain>SC5314 / ATCC MYA-2876</strain>
    </source>
</reference>
<proteinExistence type="inferred from homology"/>
<evidence type="ECO:0000250" key="1"/>
<evidence type="ECO:0000256" key="2">
    <source>
        <dbReference type="SAM" id="MobiDB-lite"/>
    </source>
</evidence>
<evidence type="ECO:0000305" key="3"/>
<sequence>MSRIIHSEDDDDDDVGSQSSSSLSSPSKSLQQDPIPTKIPLSTSIILEKKLPLEQHQKLSNLTEGSTAGGHVSNNSLDNKIMIRFVPIGSTPSIQPRVFKISATQTVSTLNRFLCKKLKFKGVLNLYIQNSFMPLPDEQIGSLYGLFKTNNELIISYCNTIAFG</sequence>
<keyword id="KW-0072">Autophagy</keyword>
<keyword id="KW-1017">Isopeptide bond</keyword>
<keyword id="KW-0472">Membrane</keyword>
<keyword id="KW-0653">Protein transport</keyword>
<keyword id="KW-1185">Reference proteome</keyword>
<keyword id="KW-0813">Transport</keyword>
<keyword id="KW-0833">Ubl conjugation pathway</keyword>
<comment type="function">
    <text evidence="1">Ubiquitin-like protein involved in cytoplasm to vacuole transport (Cvt), autophagy vesicles formation, mitophagy, and nucleophagy. Conjugation with ATG5 through a ubiquitin-like conjugating system involving also ATG7 as an E1-like activating enzyme and ATG10 as an E2-like conjugating enzyme, is essential for its function. The ATG12-ATG5 conjugate functions as an E3-like enzyme which is required for lipidation of ATG8 and ATG8 association to the vesicle membranes (By similarity).</text>
</comment>
<comment type="subunit">
    <text evidence="1">Forms a conjugate with ATG5.</text>
</comment>
<comment type="subcellular location">
    <subcellularLocation>
        <location evidence="1">Preautophagosomal structure membrane</location>
        <topology evidence="1">Peripheral membrane protein</topology>
    </subcellularLocation>
</comment>
<comment type="similarity">
    <text evidence="3">Belongs to the ATG12 family.</text>
</comment>
<organism>
    <name type="scientific">Candida albicans (strain SC5314 / ATCC MYA-2876)</name>
    <name type="common">Yeast</name>
    <dbReference type="NCBI Taxonomy" id="237561"/>
    <lineage>
        <taxon>Eukaryota</taxon>
        <taxon>Fungi</taxon>
        <taxon>Dikarya</taxon>
        <taxon>Ascomycota</taxon>
        <taxon>Saccharomycotina</taxon>
        <taxon>Pichiomycetes</taxon>
        <taxon>Debaryomycetaceae</taxon>
        <taxon>Candida/Lodderomyces clade</taxon>
        <taxon>Candida</taxon>
    </lineage>
</organism>
<accession>Q5AKU4</accession>
<accession>A0A1D8PFT8</accession>
<feature type="chain" id="PRO_0000212475" description="Ubiquitin-like protein ATG12">
    <location>
        <begin position="1"/>
        <end position="164"/>
    </location>
</feature>
<feature type="region of interest" description="Disordered" evidence="2">
    <location>
        <begin position="1"/>
        <end position="36"/>
    </location>
</feature>
<feature type="compositionally biased region" description="Low complexity" evidence="2">
    <location>
        <begin position="16"/>
        <end position="29"/>
    </location>
</feature>
<feature type="cross-link" description="Glycyl lysine isopeptide (Gly-Lys) (interchain with K-148 in ATG5)" evidence="1">
    <location>
        <position position="164"/>
    </location>
</feature>
<protein>
    <recommendedName>
        <fullName>Ubiquitin-like protein ATG12</fullName>
    </recommendedName>
    <alternativeName>
        <fullName>Autophagy-related protein 12</fullName>
    </alternativeName>
</protein>
<name>ATG12_CANAL</name>
<gene>
    <name type="primary">ATG12</name>
    <name type="ordered locus">CAALFM_C113950CA</name>
    <name type="ORF">CaO19.12500</name>
    <name type="ORF">CaO19.5033</name>
</gene>